<name>SCA3_OLIMR</name>
<comment type="function">
    <text evidence="1">Alpha toxins bind voltage-independently at site-3 of sodium channels (Nav) and inhibit the inactivation of the activated channels, thereby blocking neuronal transmission.</text>
</comment>
<comment type="subcellular location">
    <subcellularLocation>
        <location evidence="1">Secreted</location>
    </subcellularLocation>
</comment>
<comment type="tissue specificity">
    <text>Expressed by the venom gland.</text>
</comment>
<comment type="domain">
    <text evidence="3">Has the structural arrangement of an alpha-helix connected to antiparallel beta-sheets by disulfide bonds (CS-alpha/beta).</text>
</comment>
<comment type="similarity">
    <text evidence="3">Belongs to the long (4 C-C) scorpion toxin superfamily. Sodium channel inhibitor family. Alpha subfamily.</text>
</comment>
<accession>Q9GUA7</accession>
<proteinExistence type="evidence at transcript level"/>
<reference key="1">
    <citation type="submission" date="1999-05" db="EMBL/GenBank/DDBJ databases">
        <title>A new cDNA sequence encoding a toxin from Buthus martensii Karsch.</title>
        <authorList>
            <person name="Li W.-X."/>
            <person name="Zeng X.-C."/>
            <person name="Zhu S.-Y."/>
        </authorList>
    </citation>
    <scope>NUCLEOTIDE SEQUENCE [MRNA]</scope>
    <source>
        <tissue>Venom gland</tissue>
    </source>
</reference>
<reference key="2">
    <citation type="journal article" date="2002" name="Toxicon">
        <title>An overview of toxins and genes from the venom of the Asian scorpion Buthus martensi Karsch.</title>
        <authorList>
            <person name="Goudet C."/>
            <person name="Chi C.-W."/>
            <person name="Tytgat J."/>
        </authorList>
    </citation>
    <scope>REVIEW</scope>
</reference>
<keyword id="KW-1015">Disulfide bond</keyword>
<keyword id="KW-0872">Ion channel impairing toxin</keyword>
<keyword id="KW-0528">Neurotoxin</keyword>
<keyword id="KW-0964">Secreted</keyword>
<keyword id="KW-0732">Signal</keyword>
<keyword id="KW-0800">Toxin</keyword>
<keyword id="KW-0738">Voltage-gated sodium channel impairing toxin</keyword>
<dbReference type="EMBL" id="AF150009">
    <property type="protein sequence ID" value="AAG09657.1"/>
    <property type="molecule type" value="mRNA"/>
</dbReference>
<dbReference type="SMR" id="Q9GUA7"/>
<dbReference type="GO" id="GO:0005576">
    <property type="term" value="C:extracellular region"/>
    <property type="evidence" value="ECO:0007669"/>
    <property type="project" value="UniProtKB-SubCell"/>
</dbReference>
<dbReference type="GO" id="GO:0019871">
    <property type="term" value="F:sodium channel inhibitor activity"/>
    <property type="evidence" value="ECO:0007669"/>
    <property type="project" value="InterPro"/>
</dbReference>
<dbReference type="GO" id="GO:0090729">
    <property type="term" value="F:toxin activity"/>
    <property type="evidence" value="ECO:0007669"/>
    <property type="project" value="UniProtKB-KW"/>
</dbReference>
<dbReference type="GO" id="GO:0006952">
    <property type="term" value="P:defense response"/>
    <property type="evidence" value="ECO:0007669"/>
    <property type="project" value="InterPro"/>
</dbReference>
<dbReference type="CDD" id="cd23106">
    <property type="entry name" value="neurotoxins_LC_scorpion"/>
    <property type="match status" value="1"/>
</dbReference>
<dbReference type="FunFam" id="3.30.30.10:FF:000002">
    <property type="entry name" value="Alpha-like toxin BmK-M1"/>
    <property type="match status" value="1"/>
</dbReference>
<dbReference type="Gene3D" id="3.30.30.10">
    <property type="entry name" value="Knottin, scorpion toxin-like"/>
    <property type="match status" value="1"/>
</dbReference>
<dbReference type="InterPro" id="IPR044062">
    <property type="entry name" value="LCN-type_CS_alpha_beta_dom"/>
</dbReference>
<dbReference type="InterPro" id="IPR003614">
    <property type="entry name" value="Scorpion_toxin-like"/>
</dbReference>
<dbReference type="InterPro" id="IPR036574">
    <property type="entry name" value="Scorpion_toxin-like_sf"/>
</dbReference>
<dbReference type="InterPro" id="IPR018218">
    <property type="entry name" value="Scorpion_toxinL"/>
</dbReference>
<dbReference type="InterPro" id="IPR002061">
    <property type="entry name" value="Scorpion_toxinL/defensin"/>
</dbReference>
<dbReference type="Pfam" id="PF00537">
    <property type="entry name" value="Toxin_3"/>
    <property type="match status" value="1"/>
</dbReference>
<dbReference type="PRINTS" id="PR00285">
    <property type="entry name" value="SCORPNTOXIN"/>
</dbReference>
<dbReference type="PRINTS" id="PR00284">
    <property type="entry name" value="TOXIN"/>
</dbReference>
<dbReference type="SMART" id="SM00505">
    <property type="entry name" value="Knot1"/>
    <property type="match status" value="1"/>
</dbReference>
<dbReference type="SUPFAM" id="SSF57095">
    <property type="entry name" value="Scorpion toxin-like"/>
    <property type="match status" value="1"/>
</dbReference>
<dbReference type="PROSITE" id="PS51863">
    <property type="entry name" value="LCN_CSAB"/>
    <property type="match status" value="1"/>
</dbReference>
<sequence length="85" mass="9426">MNYLVFFSLALLLMTGVESVRDGYIADDKNCAYFCGRNAYCDDECKKKGAESGYCQWAGVYGNACWCYKLPDKVPIRVPGKCNGG</sequence>
<organism>
    <name type="scientific">Olivierus martensii</name>
    <name type="common">Manchurian scorpion</name>
    <name type="synonym">Mesobuthus martensii</name>
    <dbReference type="NCBI Taxonomy" id="34649"/>
    <lineage>
        <taxon>Eukaryota</taxon>
        <taxon>Metazoa</taxon>
        <taxon>Ecdysozoa</taxon>
        <taxon>Arthropoda</taxon>
        <taxon>Chelicerata</taxon>
        <taxon>Arachnida</taxon>
        <taxon>Scorpiones</taxon>
        <taxon>Buthida</taxon>
        <taxon>Buthoidea</taxon>
        <taxon>Buthidae</taxon>
        <taxon>Olivierus</taxon>
    </lineage>
</organism>
<protein>
    <recommendedName>
        <fullName>Toxin BmKa3</fullName>
    </recommendedName>
    <alternativeName>
        <fullName>Alpha-toxin 3</fullName>
    </alternativeName>
    <alternativeName>
        <fullName>BmKalpha3</fullName>
    </alternativeName>
</protein>
<evidence type="ECO:0000250" key="1"/>
<evidence type="ECO:0000255" key="2">
    <source>
        <dbReference type="PROSITE-ProRule" id="PRU01210"/>
    </source>
</evidence>
<evidence type="ECO:0000305" key="3"/>
<feature type="signal peptide" evidence="1">
    <location>
        <begin position="1"/>
        <end position="19"/>
    </location>
</feature>
<feature type="chain" id="PRO_0000035256" description="Toxin BmKa3">
    <location>
        <begin position="20"/>
        <end position="85"/>
    </location>
</feature>
<feature type="domain" description="LCN-type CS-alpha/beta" evidence="2">
    <location>
        <begin position="21"/>
        <end position="83"/>
    </location>
</feature>
<feature type="disulfide bond" evidence="2">
    <location>
        <begin position="31"/>
        <end position="82"/>
    </location>
</feature>
<feature type="disulfide bond" evidence="2">
    <location>
        <begin position="35"/>
        <end position="55"/>
    </location>
</feature>
<feature type="disulfide bond" evidence="2">
    <location>
        <begin position="41"/>
        <end position="65"/>
    </location>
</feature>
<feature type="disulfide bond" evidence="2">
    <location>
        <begin position="45"/>
        <end position="67"/>
    </location>
</feature>